<organism>
    <name type="scientific">Escherichia coli O45:K1 (strain S88 / ExPEC)</name>
    <dbReference type="NCBI Taxonomy" id="585035"/>
    <lineage>
        <taxon>Bacteria</taxon>
        <taxon>Pseudomonadati</taxon>
        <taxon>Pseudomonadota</taxon>
        <taxon>Gammaproteobacteria</taxon>
        <taxon>Enterobacterales</taxon>
        <taxon>Enterobacteriaceae</taxon>
        <taxon>Escherichia</taxon>
    </lineage>
</organism>
<protein>
    <recommendedName>
        <fullName evidence="1">Uncharacterized MFS-type transporter YcaD</fullName>
    </recommendedName>
</protein>
<keyword id="KW-0997">Cell inner membrane</keyword>
<keyword id="KW-1003">Cell membrane</keyword>
<keyword id="KW-0472">Membrane</keyword>
<keyword id="KW-1185">Reference proteome</keyword>
<keyword id="KW-0812">Transmembrane</keyword>
<keyword id="KW-1133">Transmembrane helix</keyword>
<keyword id="KW-0813">Transport</keyword>
<feature type="chain" id="PRO_1000137483" description="Uncharacterized MFS-type transporter YcaD">
    <location>
        <begin position="1"/>
        <end position="382"/>
    </location>
</feature>
<feature type="transmembrane region" description="Helical" evidence="1">
    <location>
        <begin position="14"/>
        <end position="34"/>
    </location>
</feature>
<feature type="transmembrane region" description="Helical" evidence="1">
    <location>
        <begin position="45"/>
        <end position="65"/>
    </location>
</feature>
<feature type="transmembrane region" description="Helical" evidence="1">
    <location>
        <begin position="79"/>
        <end position="99"/>
    </location>
</feature>
<feature type="transmembrane region" description="Helical" evidence="1">
    <location>
        <begin position="102"/>
        <end position="122"/>
    </location>
</feature>
<feature type="transmembrane region" description="Helical" evidence="1">
    <location>
        <begin position="131"/>
        <end position="151"/>
    </location>
</feature>
<feature type="transmembrane region" description="Helical" evidence="1">
    <location>
        <begin position="157"/>
        <end position="177"/>
    </location>
</feature>
<feature type="transmembrane region" description="Helical" evidence="1">
    <location>
        <begin position="204"/>
        <end position="224"/>
    </location>
</feature>
<feature type="transmembrane region" description="Helical" evidence="1">
    <location>
        <begin position="235"/>
        <end position="255"/>
    </location>
</feature>
<feature type="transmembrane region" description="Helical" evidence="1">
    <location>
        <begin position="270"/>
        <end position="290"/>
    </location>
</feature>
<feature type="transmembrane region" description="Helical" evidence="1">
    <location>
        <begin position="291"/>
        <end position="311"/>
    </location>
</feature>
<feature type="transmembrane region" description="Helical" evidence="1">
    <location>
        <begin position="325"/>
        <end position="345"/>
    </location>
</feature>
<feature type="transmembrane region" description="Helical" evidence="1">
    <location>
        <begin position="348"/>
        <end position="368"/>
    </location>
</feature>
<name>YCAD_ECO45</name>
<dbReference type="EMBL" id="CU928161">
    <property type="protein sequence ID" value="CAR02261.1"/>
    <property type="molecule type" value="Genomic_DNA"/>
</dbReference>
<dbReference type="RefSeq" id="WP_000109282.1">
    <property type="nucleotide sequence ID" value="NC_011742.1"/>
</dbReference>
<dbReference type="SMR" id="B7MHL0"/>
<dbReference type="KEGG" id="ecz:ECS88_0929"/>
<dbReference type="HOGENOM" id="CLU_035018_1_2_6"/>
<dbReference type="Proteomes" id="UP000000747">
    <property type="component" value="Chromosome"/>
</dbReference>
<dbReference type="GO" id="GO:0005886">
    <property type="term" value="C:plasma membrane"/>
    <property type="evidence" value="ECO:0007669"/>
    <property type="project" value="UniProtKB-SubCell"/>
</dbReference>
<dbReference type="GO" id="GO:0022857">
    <property type="term" value="F:transmembrane transporter activity"/>
    <property type="evidence" value="ECO:0007669"/>
    <property type="project" value="UniProtKB-UniRule"/>
</dbReference>
<dbReference type="CDD" id="cd17477">
    <property type="entry name" value="MFS_YcaD_like"/>
    <property type="match status" value="1"/>
</dbReference>
<dbReference type="FunFam" id="1.20.1250.20:FF:000041">
    <property type="entry name" value="Uncharacterized MFS-type transporter YcaD"/>
    <property type="match status" value="1"/>
</dbReference>
<dbReference type="FunFam" id="1.20.1250.20:FF:000066">
    <property type="entry name" value="Uncharacterized MFS-type transporter YcaD"/>
    <property type="match status" value="1"/>
</dbReference>
<dbReference type="Gene3D" id="1.20.1250.20">
    <property type="entry name" value="MFS general substrate transporter like domains"/>
    <property type="match status" value="2"/>
</dbReference>
<dbReference type="HAMAP" id="MF_01149">
    <property type="entry name" value="MFS_YcaD"/>
    <property type="match status" value="1"/>
</dbReference>
<dbReference type="InterPro" id="IPR011701">
    <property type="entry name" value="MFS"/>
</dbReference>
<dbReference type="InterPro" id="IPR020846">
    <property type="entry name" value="MFS_dom"/>
</dbReference>
<dbReference type="InterPro" id="IPR036259">
    <property type="entry name" value="MFS_trans_sf"/>
</dbReference>
<dbReference type="InterPro" id="IPR023745">
    <property type="entry name" value="MFS_YcaD"/>
</dbReference>
<dbReference type="InterPro" id="IPR047200">
    <property type="entry name" value="MFS_YcaD-like"/>
</dbReference>
<dbReference type="NCBIfam" id="NF002962">
    <property type="entry name" value="PRK03633.1"/>
    <property type="match status" value="1"/>
</dbReference>
<dbReference type="PANTHER" id="PTHR23521">
    <property type="entry name" value="TRANSPORTER MFS SUPERFAMILY"/>
    <property type="match status" value="1"/>
</dbReference>
<dbReference type="PANTHER" id="PTHR23521:SF2">
    <property type="entry name" value="TRANSPORTER MFS SUPERFAMILY"/>
    <property type="match status" value="1"/>
</dbReference>
<dbReference type="Pfam" id="PF07690">
    <property type="entry name" value="MFS_1"/>
    <property type="match status" value="1"/>
</dbReference>
<dbReference type="SUPFAM" id="SSF103473">
    <property type="entry name" value="MFS general substrate transporter"/>
    <property type="match status" value="1"/>
</dbReference>
<dbReference type="PROSITE" id="PS50850">
    <property type="entry name" value="MFS"/>
    <property type="match status" value="1"/>
</dbReference>
<proteinExistence type="inferred from homology"/>
<gene>
    <name evidence="1" type="primary">ycaD</name>
    <name type="ordered locus">ECS88_0929</name>
</gene>
<comment type="subcellular location">
    <subcellularLocation>
        <location evidence="1">Cell inner membrane</location>
        <topology evidence="1">Multi-pass membrane protein</topology>
    </subcellularLocation>
</comment>
<comment type="similarity">
    <text evidence="1">Belongs to the major facilitator superfamily. YcaD (TC 2.A.1.26) family.</text>
</comment>
<evidence type="ECO:0000255" key="1">
    <source>
        <dbReference type="HAMAP-Rule" id="MF_01149"/>
    </source>
</evidence>
<sequence>MSTYTRPVMLLLSGLLLLTLAIAVLNTLVPLWLAQEHMSTWQVGVVSSSYFTGNLVGTLLTGYVIKRIGFNRSYYLASFIFAAGCAGLGLMIGFWSWLAWRFVAGIGCAMIWVVVESALMCSGTSRNRGRLLAAYMMVYYVGTFLGQLLVSKVSTELMSVLPWVTGLTLAGILPLLFTHVLNQQAENHDSTSITSMLKLRQARLGVNGCIISGIVLGSLYGLMPLYLNHKGVSNASIGFWMAVLVSAGILGQWPIGRLADKFGRLLVLRVQVFVVILGSIAMLSQAAMAPALFILGAAGFTLYPVAMAWACEKVEHHQLVAMNQALLLSYTVGSLLGPSFTAMLMQNFSDNLLFIMIASVSFIYLLMLLRNAGHTPKPVAHV</sequence>
<accession>B7MHL0</accession>
<reference key="1">
    <citation type="journal article" date="2009" name="PLoS Genet.">
        <title>Organised genome dynamics in the Escherichia coli species results in highly diverse adaptive paths.</title>
        <authorList>
            <person name="Touchon M."/>
            <person name="Hoede C."/>
            <person name="Tenaillon O."/>
            <person name="Barbe V."/>
            <person name="Baeriswyl S."/>
            <person name="Bidet P."/>
            <person name="Bingen E."/>
            <person name="Bonacorsi S."/>
            <person name="Bouchier C."/>
            <person name="Bouvet O."/>
            <person name="Calteau A."/>
            <person name="Chiapello H."/>
            <person name="Clermont O."/>
            <person name="Cruveiller S."/>
            <person name="Danchin A."/>
            <person name="Diard M."/>
            <person name="Dossat C."/>
            <person name="Karoui M.E."/>
            <person name="Frapy E."/>
            <person name="Garry L."/>
            <person name="Ghigo J.M."/>
            <person name="Gilles A.M."/>
            <person name="Johnson J."/>
            <person name="Le Bouguenec C."/>
            <person name="Lescat M."/>
            <person name="Mangenot S."/>
            <person name="Martinez-Jehanne V."/>
            <person name="Matic I."/>
            <person name="Nassif X."/>
            <person name="Oztas S."/>
            <person name="Petit M.A."/>
            <person name="Pichon C."/>
            <person name="Rouy Z."/>
            <person name="Ruf C.S."/>
            <person name="Schneider D."/>
            <person name="Tourret J."/>
            <person name="Vacherie B."/>
            <person name="Vallenet D."/>
            <person name="Medigue C."/>
            <person name="Rocha E.P.C."/>
            <person name="Denamur E."/>
        </authorList>
    </citation>
    <scope>NUCLEOTIDE SEQUENCE [LARGE SCALE GENOMIC DNA]</scope>
    <source>
        <strain>S88 / ExPEC</strain>
    </source>
</reference>